<protein>
    <recommendedName>
        <fullName>Rab15 effector protein</fullName>
    </recommendedName>
</protein>
<reference key="1">
    <citation type="journal article" date="2005" name="Science">
        <title>The transcriptional landscape of the mammalian genome.</title>
        <authorList>
            <person name="Carninci P."/>
            <person name="Kasukawa T."/>
            <person name="Katayama S."/>
            <person name="Gough J."/>
            <person name="Frith M.C."/>
            <person name="Maeda N."/>
            <person name="Oyama R."/>
            <person name="Ravasi T."/>
            <person name="Lenhard B."/>
            <person name="Wells C."/>
            <person name="Kodzius R."/>
            <person name="Shimokawa K."/>
            <person name="Bajic V.B."/>
            <person name="Brenner S.E."/>
            <person name="Batalov S."/>
            <person name="Forrest A.R."/>
            <person name="Zavolan M."/>
            <person name="Davis M.J."/>
            <person name="Wilming L.G."/>
            <person name="Aidinis V."/>
            <person name="Allen J.E."/>
            <person name="Ambesi-Impiombato A."/>
            <person name="Apweiler R."/>
            <person name="Aturaliya R.N."/>
            <person name="Bailey T.L."/>
            <person name="Bansal M."/>
            <person name="Baxter L."/>
            <person name="Beisel K.W."/>
            <person name="Bersano T."/>
            <person name="Bono H."/>
            <person name="Chalk A.M."/>
            <person name="Chiu K.P."/>
            <person name="Choudhary V."/>
            <person name="Christoffels A."/>
            <person name="Clutterbuck D.R."/>
            <person name="Crowe M.L."/>
            <person name="Dalla E."/>
            <person name="Dalrymple B.P."/>
            <person name="de Bono B."/>
            <person name="Della Gatta G."/>
            <person name="di Bernardo D."/>
            <person name="Down T."/>
            <person name="Engstrom P."/>
            <person name="Fagiolini M."/>
            <person name="Faulkner G."/>
            <person name="Fletcher C.F."/>
            <person name="Fukushima T."/>
            <person name="Furuno M."/>
            <person name="Futaki S."/>
            <person name="Gariboldi M."/>
            <person name="Georgii-Hemming P."/>
            <person name="Gingeras T.R."/>
            <person name="Gojobori T."/>
            <person name="Green R.E."/>
            <person name="Gustincich S."/>
            <person name="Harbers M."/>
            <person name="Hayashi Y."/>
            <person name="Hensch T.K."/>
            <person name="Hirokawa N."/>
            <person name="Hill D."/>
            <person name="Huminiecki L."/>
            <person name="Iacono M."/>
            <person name="Ikeo K."/>
            <person name="Iwama A."/>
            <person name="Ishikawa T."/>
            <person name="Jakt M."/>
            <person name="Kanapin A."/>
            <person name="Katoh M."/>
            <person name="Kawasawa Y."/>
            <person name="Kelso J."/>
            <person name="Kitamura H."/>
            <person name="Kitano H."/>
            <person name="Kollias G."/>
            <person name="Krishnan S.P."/>
            <person name="Kruger A."/>
            <person name="Kummerfeld S.K."/>
            <person name="Kurochkin I.V."/>
            <person name="Lareau L.F."/>
            <person name="Lazarevic D."/>
            <person name="Lipovich L."/>
            <person name="Liu J."/>
            <person name="Liuni S."/>
            <person name="McWilliam S."/>
            <person name="Madan Babu M."/>
            <person name="Madera M."/>
            <person name="Marchionni L."/>
            <person name="Matsuda H."/>
            <person name="Matsuzawa S."/>
            <person name="Miki H."/>
            <person name="Mignone F."/>
            <person name="Miyake S."/>
            <person name="Morris K."/>
            <person name="Mottagui-Tabar S."/>
            <person name="Mulder N."/>
            <person name="Nakano N."/>
            <person name="Nakauchi H."/>
            <person name="Ng P."/>
            <person name="Nilsson R."/>
            <person name="Nishiguchi S."/>
            <person name="Nishikawa S."/>
            <person name="Nori F."/>
            <person name="Ohara O."/>
            <person name="Okazaki Y."/>
            <person name="Orlando V."/>
            <person name="Pang K.C."/>
            <person name="Pavan W.J."/>
            <person name="Pavesi G."/>
            <person name="Pesole G."/>
            <person name="Petrovsky N."/>
            <person name="Piazza S."/>
            <person name="Reed J."/>
            <person name="Reid J.F."/>
            <person name="Ring B.Z."/>
            <person name="Ringwald M."/>
            <person name="Rost B."/>
            <person name="Ruan Y."/>
            <person name="Salzberg S.L."/>
            <person name="Sandelin A."/>
            <person name="Schneider C."/>
            <person name="Schoenbach C."/>
            <person name="Sekiguchi K."/>
            <person name="Semple C.A."/>
            <person name="Seno S."/>
            <person name="Sessa L."/>
            <person name="Sheng Y."/>
            <person name="Shibata Y."/>
            <person name="Shimada H."/>
            <person name="Shimada K."/>
            <person name="Silva D."/>
            <person name="Sinclair B."/>
            <person name="Sperling S."/>
            <person name="Stupka E."/>
            <person name="Sugiura K."/>
            <person name="Sultana R."/>
            <person name="Takenaka Y."/>
            <person name="Taki K."/>
            <person name="Tammoja K."/>
            <person name="Tan S.L."/>
            <person name="Tang S."/>
            <person name="Taylor M.S."/>
            <person name="Tegner J."/>
            <person name="Teichmann S.A."/>
            <person name="Ueda H.R."/>
            <person name="van Nimwegen E."/>
            <person name="Verardo R."/>
            <person name="Wei C.L."/>
            <person name="Yagi K."/>
            <person name="Yamanishi H."/>
            <person name="Zabarovsky E."/>
            <person name="Zhu S."/>
            <person name="Zimmer A."/>
            <person name="Hide W."/>
            <person name="Bult C."/>
            <person name="Grimmond S.M."/>
            <person name="Teasdale R.D."/>
            <person name="Liu E.T."/>
            <person name="Brusic V."/>
            <person name="Quackenbush J."/>
            <person name="Wahlestedt C."/>
            <person name="Mattick J.S."/>
            <person name="Hume D.A."/>
            <person name="Kai C."/>
            <person name="Sasaki D."/>
            <person name="Tomaru Y."/>
            <person name="Fukuda S."/>
            <person name="Kanamori-Katayama M."/>
            <person name="Suzuki M."/>
            <person name="Aoki J."/>
            <person name="Arakawa T."/>
            <person name="Iida J."/>
            <person name="Imamura K."/>
            <person name="Itoh M."/>
            <person name="Kato T."/>
            <person name="Kawaji H."/>
            <person name="Kawagashira N."/>
            <person name="Kawashima T."/>
            <person name="Kojima M."/>
            <person name="Kondo S."/>
            <person name="Konno H."/>
            <person name="Nakano K."/>
            <person name="Ninomiya N."/>
            <person name="Nishio T."/>
            <person name="Okada M."/>
            <person name="Plessy C."/>
            <person name="Shibata K."/>
            <person name="Shiraki T."/>
            <person name="Suzuki S."/>
            <person name="Tagami M."/>
            <person name="Waki K."/>
            <person name="Watahiki A."/>
            <person name="Okamura-Oho Y."/>
            <person name="Suzuki H."/>
            <person name="Kawai J."/>
            <person name="Hayashizaki Y."/>
        </authorList>
    </citation>
    <scope>NUCLEOTIDE SEQUENCE [LARGE SCALE MRNA]</scope>
    <source>
        <strain>C57BL/6J</strain>
        <tissue>Stomach</tissue>
    </source>
</reference>
<reference key="2">
    <citation type="journal article" date="2004" name="Genome Res.">
        <title>The status, quality, and expansion of the NIH full-length cDNA project: the Mammalian Gene Collection (MGC).</title>
        <authorList>
            <consortium name="The MGC Project Team"/>
        </authorList>
    </citation>
    <scope>NUCLEOTIDE SEQUENCE [LARGE SCALE MRNA]</scope>
    <source>
        <strain>FVB/N</strain>
        <tissue>Colon</tissue>
    </source>
</reference>
<sequence>MGQKASQQVAPKDSQEVLAMCEVVSAAISHAAQKLKEYLGFEYPLSRLCLAASSLTEVFLVHFVTFCQERGADEWLTTTKMTKHQAWLFGADWIWTFWGPDKQIRLQVAVQTLRMASLPLTDPKSCESRGEESWKKGRFDKLQEFCNLVGEDCLGLFIIFGVPGEPKAIRGVVLESVRNGMMESQLPGRKAVEQFVLETKDCISIKELLGNCLSKRDGLSDMGRVYIRIL</sequence>
<comment type="function">
    <text evidence="2">Effector that interacts with Rab GTPases in their active form (GTP-bound) including RAB15, RAB3A-D and RAB34. Controls downstream signaling such as cell proliferation and cell migration. Also regulates transferrin receptor recycling from the endocytic recycling compartment.</text>
</comment>
<comment type="subunit">
    <text evidence="2">Interacts with the GTP-bound form of RAB15, RAB3A-D and RAB34.</text>
</comment>
<comment type="subcellular location">
    <subcellularLocation>
        <location evidence="1">Early endosome membrane</location>
    </subcellularLocation>
    <text evidence="1">Colocalizes with RAB11 and RAB15 to the endocytic recycling compartment.</text>
</comment>
<comment type="sequence caution" evidence="4">
    <conflict type="frameshift">
        <sequence resource="EMBL-CDS" id="BAB25994"/>
    </conflict>
</comment>
<feature type="initiator methionine" description="Removed" evidence="3">
    <location>
        <position position="1"/>
    </location>
</feature>
<feature type="chain" id="PRO_0000323588" description="Rab15 effector protein">
    <location>
        <begin position="2"/>
        <end position="230"/>
    </location>
</feature>
<feature type="lipid moiety-binding region" description="N-myristoyl glycine" evidence="3">
    <location>
        <position position="2"/>
    </location>
</feature>
<feature type="sequence conflict" description="In Ref. 2; AAH24344." evidence="4" ref="2">
    <original>Q</original>
    <variation>E</variation>
    <location>
        <position position="103"/>
    </location>
</feature>
<feature type="sequence conflict" description="In Ref. 2; AAH24344." evidence="4" ref="2">
    <original>I</original>
    <variation>V</variation>
    <location>
        <position position="203"/>
    </location>
</feature>
<organism>
    <name type="scientific">Mus musculus</name>
    <name type="common">Mouse</name>
    <dbReference type="NCBI Taxonomy" id="10090"/>
    <lineage>
        <taxon>Eukaryota</taxon>
        <taxon>Metazoa</taxon>
        <taxon>Chordata</taxon>
        <taxon>Craniata</taxon>
        <taxon>Vertebrata</taxon>
        <taxon>Euteleostomi</taxon>
        <taxon>Mammalia</taxon>
        <taxon>Eutheria</taxon>
        <taxon>Euarchontoglires</taxon>
        <taxon>Glires</taxon>
        <taxon>Rodentia</taxon>
        <taxon>Myomorpha</taxon>
        <taxon>Muroidea</taxon>
        <taxon>Muridae</taxon>
        <taxon>Murinae</taxon>
        <taxon>Mus</taxon>
        <taxon>Mus</taxon>
    </lineage>
</organism>
<name>REP15_MOUSE</name>
<dbReference type="EMBL" id="AK008892">
    <property type="protein sequence ID" value="BAB25956.1"/>
    <property type="molecule type" value="mRNA"/>
</dbReference>
<dbReference type="EMBL" id="AK008964">
    <property type="protein sequence ID" value="BAB25994.1"/>
    <property type="status" value="ALT_FRAME"/>
    <property type="molecule type" value="mRNA"/>
</dbReference>
<dbReference type="EMBL" id="BC024344">
    <property type="protein sequence ID" value="AAH24344.1"/>
    <property type="molecule type" value="mRNA"/>
</dbReference>
<dbReference type="CCDS" id="CCDS20704.1"/>
<dbReference type="RefSeq" id="NP_079896.1">
    <property type="nucleotide sequence ID" value="NM_025620.2"/>
</dbReference>
<dbReference type="SMR" id="Q9D7T1"/>
<dbReference type="FunCoup" id="Q9D7T1">
    <property type="interactions" value="96"/>
</dbReference>
<dbReference type="STRING" id="10090.ENSMUSP00000037503"/>
<dbReference type="PhosphoSitePlus" id="Q9D7T1"/>
<dbReference type="PaxDb" id="10090-ENSMUSP00000037503"/>
<dbReference type="PeptideAtlas" id="Q9D7T1"/>
<dbReference type="ProteomicsDB" id="255226"/>
<dbReference type="Antibodypedia" id="49309">
    <property type="antibodies" value="26 antibodies from 12 providers"/>
</dbReference>
<dbReference type="DNASU" id="66532"/>
<dbReference type="Ensembl" id="ENSMUST00000036194.6">
    <property type="protein sequence ID" value="ENSMUSP00000037503.5"/>
    <property type="gene ID" value="ENSMUSG00000040121.6"/>
</dbReference>
<dbReference type="GeneID" id="66532"/>
<dbReference type="KEGG" id="mmu:66532"/>
<dbReference type="UCSC" id="uc009esr.1">
    <property type="organism name" value="mouse"/>
</dbReference>
<dbReference type="AGR" id="MGI:1913782"/>
<dbReference type="CTD" id="387849"/>
<dbReference type="MGI" id="MGI:1913782">
    <property type="gene designation" value="Rep15"/>
</dbReference>
<dbReference type="VEuPathDB" id="HostDB:ENSMUSG00000040121"/>
<dbReference type="eggNOG" id="ENOG502QQ95">
    <property type="taxonomic scope" value="Eukaryota"/>
</dbReference>
<dbReference type="GeneTree" id="ENSGT00390000005178"/>
<dbReference type="HOGENOM" id="CLU_103399_0_0_1"/>
<dbReference type="InParanoid" id="Q9D7T1"/>
<dbReference type="OMA" id="MFGVPGK"/>
<dbReference type="OrthoDB" id="8519068at2759"/>
<dbReference type="PhylomeDB" id="Q9D7T1"/>
<dbReference type="TreeFam" id="TF337114"/>
<dbReference type="BioGRID-ORCS" id="66532">
    <property type="hits" value="1 hit in 77 CRISPR screens"/>
</dbReference>
<dbReference type="PRO" id="PR:Q9D7T1"/>
<dbReference type="Proteomes" id="UP000000589">
    <property type="component" value="Chromosome 6"/>
</dbReference>
<dbReference type="RNAct" id="Q9D7T1">
    <property type="molecule type" value="protein"/>
</dbReference>
<dbReference type="Bgee" id="ENSMUSG00000040121">
    <property type="expression patterns" value="Expressed in colon and 49 other cell types or tissues"/>
</dbReference>
<dbReference type="GO" id="GO:0031901">
    <property type="term" value="C:early endosome membrane"/>
    <property type="evidence" value="ECO:0007669"/>
    <property type="project" value="UniProtKB-SubCell"/>
</dbReference>
<dbReference type="GO" id="GO:0048471">
    <property type="term" value="C:perinuclear region of cytoplasm"/>
    <property type="evidence" value="ECO:0007669"/>
    <property type="project" value="Ensembl"/>
</dbReference>
<dbReference type="GO" id="GO:0055037">
    <property type="term" value="C:recycling endosome"/>
    <property type="evidence" value="ECO:0007669"/>
    <property type="project" value="Ensembl"/>
</dbReference>
<dbReference type="GO" id="GO:0001881">
    <property type="term" value="P:receptor recycling"/>
    <property type="evidence" value="ECO:0007669"/>
    <property type="project" value="Ensembl"/>
</dbReference>
<dbReference type="GO" id="GO:0033572">
    <property type="term" value="P:transferrin transport"/>
    <property type="evidence" value="ECO:0007669"/>
    <property type="project" value="Ensembl"/>
</dbReference>
<dbReference type="InterPro" id="IPR027985">
    <property type="entry name" value="Rab15_effector"/>
</dbReference>
<dbReference type="PANTHER" id="PTHR36682">
    <property type="entry name" value="RAB15 EFFECTOR PROTEIN"/>
    <property type="match status" value="1"/>
</dbReference>
<dbReference type="PANTHER" id="PTHR36682:SF1">
    <property type="entry name" value="RAB15 EFFECTOR PROTEIN"/>
    <property type="match status" value="1"/>
</dbReference>
<dbReference type="Pfam" id="PF15208">
    <property type="entry name" value="Rab15_effector"/>
    <property type="match status" value="1"/>
</dbReference>
<accession>Q9D7T1</accession>
<accession>Q8R1M9</accession>
<accession>Q9D7R5</accession>
<keyword id="KW-0967">Endosome</keyword>
<keyword id="KW-0449">Lipoprotein</keyword>
<keyword id="KW-0472">Membrane</keyword>
<keyword id="KW-0519">Myristate</keyword>
<keyword id="KW-1185">Reference proteome</keyword>
<evidence type="ECO:0000250" key="1"/>
<evidence type="ECO:0000250" key="2">
    <source>
        <dbReference type="UniProtKB" id="Q6BDI9"/>
    </source>
</evidence>
<evidence type="ECO:0000255" key="3"/>
<evidence type="ECO:0000305" key="4"/>
<evidence type="ECO:0000312" key="5">
    <source>
        <dbReference type="MGI" id="MGI:1913782"/>
    </source>
</evidence>
<proteinExistence type="evidence at transcript level"/>
<gene>
    <name evidence="5" type="primary">Rep15</name>
</gene>